<proteinExistence type="inferred from homology"/>
<organism>
    <name type="scientific">Dehalococcoides mccartyi (strain ATCC BAA-2266 / KCTC 15142 / 195)</name>
    <name type="common">Dehalococcoides ethenogenes (strain 195)</name>
    <dbReference type="NCBI Taxonomy" id="243164"/>
    <lineage>
        <taxon>Bacteria</taxon>
        <taxon>Bacillati</taxon>
        <taxon>Chloroflexota</taxon>
        <taxon>Dehalococcoidia</taxon>
        <taxon>Dehalococcoidales</taxon>
        <taxon>Dehalococcoidaceae</taxon>
        <taxon>Dehalococcoides</taxon>
    </lineage>
</organism>
<protein>
    <recommendedName>
        <fullName evidence="1">Large ribosomal subunit protein uL29</fullName>
    </recommendedName>
    <alternativeName>
        <fullName evidence="2">50S ribosomal protein L29</fullName>
    </alternativeName>
</protein>
<evidence type="ECO:0000255" key="1">
    <source>
        <dbReference type="HAMAP-Rule" id="MF_00374"/>
    </source>
</evidence>
<evidence type="ECO:0000305" key="2"/>
<comment type="similarity">
    <text evidence="1">Belongs to the universal ribosomal protein uL29 family.</text>
</comment>
<accession>Q3Z973</accession>
<gene>
    <name evidence="1" type="primary">rpmC</name>
    <name type="ordered locus">DET0482</name>
</gene>
<keyword id="KW-0687">Ribonucleoprotein</keyword>
<keyword id="KW-0689">Ribosomal protein</keyword>
<reference key="1">
    <citation type="journal article" date="2005" name="Science">
        <title>Genome sequence of the PCE-dechlorinating bacterium Dehalococcoides ethenogenes.</title>
        <authorList>
            <person name="Seshadri R."/>
            <person name="Adrian L."/>
            <person name="Fouts D.E."/>
            <person name="Eisen J.A."/>
            <person name="Phillippy A.M."/>
            <person name="Methe B.A."/>
            <person name="Ward N.L."/>
            <person name="Nelson W.C."/>
            <person name="DeBoy R.T."/>
            <person name="Khouri H.M."/>
            <person name="Kolonay J.F."/>
            <person name="Dodson R.J."/>
            <person name="Daugherty S.C."/>
            <person name="Brinkac L.M."/>
            <person name="Sullivan S.A."/>
            <person name="Madupu R."/>
            <person name="Nelson K.E."/>
            <person name="Kang K.H."/>
            <person name="Impraim M."/>
            <person name="Tran K."/>
            <person name="Robinson J.M."/>
            <person name="Forberger H.A."/>
            <person name="Fraser C.M."/>
            <person name="Zinder S.H."/>
            <person name="Heidelberg J.F."/>
        </authorList>
    </citation>
    <scope>NUCLEOTIDE SEQUENCE [LARGE SCALE GENOMIC DNA]</scope>
    <source>
        <strain>ATCC BAA-2266 / KCTC 15142 / 195</strain>
    </source>
</reference>
<name>RL29_DEHM1</name>
<feature type="chain" id="PRO_1000007468" description="Large ribosomal subunit protein uL29">
    <location>
        <begin position="1"/>
        <end position="65"/>
    </location>
</feature>
<sequence>MNINDIRGLSDTEIKKKLEDAHKELFELRLKLSTRQLVNHRELPRVKNDIARILTVMRERELQIR</sequence>
<dbReference type="EMBL" id="CP000027">
    <property type="protein sequence ID" value="AAW40175.1"/>
    <property type="molecule type" value="Genomic_DNA"/>
</dbReference>
<dbReference type="RefSeq" id="WP_010936259.1">
    <property type="nucleotide sequence ID" value="NC_002936.3"/>
</dbReference>
<dbReference type="SMR" id="Q3Z973"/>
<dbReference type="FunCoup" id="Q3Z973">
    <property type="interactions" value="293"/>
</dbReference>
<dbReference type="STRING" id="243164.DET0482"/>
<dbReference type="GeneID" id="3230139"/>
<dbReference type="KEGG" id="det:DET0482"/>
<dbReference type="eggNOG" id="COG0255">
    <property type="taxonomic scope" value="Bacteria"/>
</dbReference>
<dbReference type="HOGENOM" id="CLU_158491_3_3_0"/>
<dbReference type="InParanoid" id="Q3Z973"/>
<dbReference type="Proteomes" id="UP000008289">
    <property type="component" value="Chromosome"/>
</dbReference>
<dbReference type="GO" id="GO:0022625">
    <property type="term" value="C:cytosolic large ribosomal subunit"/>
    <property type="evidence" value="ECO:0007669"/>
    <property type="project" value="TreeGrafter"/>
</dbReference>
<dbReference type="GO" id="GO:0003735">
    <property type="term" value="F:structural constituent of ribosome"/>
    <property type="evidence" value="ECO:0007669"/>
    <property type="project" value="InterPro"/>
</dbReference>
<dbReference type="GO" id="GO:0006412">
    <property type="term" value="P:translation"/>
    <property type="evidence" value="ECO:0007669"/>
    <property type="project" value="UniProtKB-UniRule"/>
</dbReference>
<dbReference type="CDD" id="cd00427">
    <property type="entry name" value="Ribosomal_L29_HIP"/>
    <property type="match status" value="1"/>
</dbReference>
<dbReference type="FunFam" id="1.10.287.310:FF:000001">
    <property type="entry name" value="50S ribosomal protein L29"/>
    <property type="match status" value="1"/>
</dbReference>
<dbReference type="Gene3D" id="1.10.287.310">
    <property type="match status" value="1"/>
</dbReference>
<dbReference type="HAMAP" id="MF_00374">
    <property type="entry name" value="Ribosomal_uL29"/>
    <property type="match status" value="1"/>
</dbReference>
<dbReference type="InterPro" id="IPR050063">
    <property type="entry name" value="Ribosomal_protein_uL29"/>
</dbReference>
<dbReference type="InterPro" id="IPR001854">
    <property type="entry name" value="Ribosomal_uL29"/>
</dbReference>
<dbReference type="InterPro" id="IPR036049">
    <property type="entry name" value="Ribosomal_uL29_sf"/>
</dbReference>
<dbReference type="NCBIfam" id="TIGR00012">
    <property type="entry name" value="L29"/>
    <property type="match status" value="1"/>
</dbReference>
<dbReference type="PANTHER" id="PTHR10916">
    <property type="entry name" value="60S RIBOSOMAL PROTEIN L35/50S RIBOSOMAL PROTEIN L29"/>
    <property type="match status" value="1"/>
</dbReference>
<dbReference type="PANTHER" id="PTHR10916:SF0">
    <property type="entry name" value="LARGE RIBOSOMAL SUBUNIT PROTEIN UL29C"/>
    <property type="match status" value="1"/>
</dbReference>
<dbReference type="Pfam" id="PF00831">
    <property type="entry name" value="Ribosomal_L29"/>
    <property type="match status" value="1"/>
</dbReference>
<dbReference type="SUPFAM" id="SSF46561">
    <property type="entry name" value="Ribosomal protein L29 (L29p)"/>
    <property type="match status" value="1"/>
</dbReference>